<organism>
    <name type="scientific">Bothrops jararacussu</name>
    <name type="common">Jararacussu</name>
    <dbReference type="NCBI Taxonomy" id="8726"/>
    <lineage>
        <taxon>Eukaryota</taxon>
        <taxon>Metazoa</taxon>
        <taxon>Chordata</taxon>
        <taxon>Craniata</taxon>
        <taxon>Vertebrata</taxon>
        <taxon>Euteleostomi</taxon>
        <taxon>Lepidosauria</taxon>
        <taxon>Squamata</taxon>
        <taxon>Bifurcata</taxon>
        <taxon>Unidentata</taxon>
        <taxon>Episquamata</taxon>
        <taxon>Toxicofera</taxon>
        <taxon>Serpentes</taxon>
        <taxon>Colubroidea</taxon>
        <taxon>Viperidae</taxon>
        <taxon>Crotalinae</taxon>
        <taxon>Bothrops</taxon>
    </lineage>
</organism>
<accession>P0DV78</accession>
<reference key="1">
    <citation type="journal article" date="2017" name="Int. J. Biol. Macromol.">
        <title>A new l-amino acid oxidase from Bothrops jararacussu snake venom: isolation, partial characterization, and assessment of pro-apoptotic and antiprotozoal activities.</title>
        <authorList>
            <person name="Carone S.E.I."/>
            <person name="Costa T.R."/>
            <person name="Burin S.M."/>
            <person name="Cintra A.C.O."/>
            <person name="Zoccal K.F."/>
            <person name="Bianchini F.J."/>
            <person name="Tucci L.F.F."/>
            <person name="Franco J.J."/>
            <person name="Torqueti M.R."/>
            <person name="Faccioli L.H."/>
            <person name="Albuquerque S."/>
            <person name="Castro F.A."/>
            <person name="Sampaio S.V."/>
        </authorList>
    </citation>
    <scope>PROTEIN SEQUENCE</scope>
    <scope>FUNCTION</scope>
    <scope>SUBCELLULAR LOCATION</scope>
    <scope>CATALYTIC ACTIVITY</scope>
    <source>
        <tissue>Venom</tissue>
    </source>
</reference>
<reference key="2">
    <citation type="journal article" date="2018" name="Int. J. Biol. Macromol.">
        <title>The toxin BjussuLAAO-II induces oxidative stress and DNA damage, upregulates the inflammatory cytokine genes TNF and IL6, and downregulates the apoptotic-related genes BAX, BCL2 and RELA in human Caco-2 cells.</title>
        <authorList>
            <person name="Machado A.R.T."/>
            <person name="Aissa A.F."/>
            <person name="Ribeiro D.L."/>
            <person name="Hernandes L.C."/>
            <person name="Machado C.S."/>
            <person name="Bianchi M.L.P."/>
            <person name="Sampaio S.V."/>
            <person name="Antunes L.M.G."/>
        </authorList>
    </citation>
    <scope>FUNCTION</scope>
</reference>
<reference key="3">
    <citation type="journal article" date="2018" name="J. Venom. Anim. Toxins Incl. Trop. Dis.">
        <title>Kinetic investigations and stability studies of two Bothrops L-amino acid oxidases.</title>
        <authorList>
            <person name="Costa T.R."/>
            <person name="Carone S.E.I."/>
            <person name="Tucci L.F.F."/>
            <person name="Menaldo D.L."/>
            <person name="Rosa-Garzon N.G."/>
            <person name="Cabral H."/>
            <person name="Sampaio S.V."/>
        </authorList>
    </citation>
    <scope>FUNCTION</scope>
    <scope>CATALYTIC ACTIVITY</scope>
    <scope>ACTIVITY REGULATION</scope>
    <scope>BIOPHYSICOCHEMICAL PROPERTIES</scope>
</reference>
<reference key="4">
    <citation type="journal article" date="2019" name="Int. J. Biol. Macromol.">
        <title>Cytotoxic, genotoxic, and oxidative stress-inducing effect of an l-amino acid oxidase isolated from Bothrops jararacussu venom in a co-culture model of HepG2 and HUVEC cells.</title>
        <authorList>
            <person name="Machado A.R.T."/>
            <person name="Aissa A.F."/>
            <person name="Ribeiro D.L."/>
            <person name="Costa T.R."/>
            <person name="Ferreira R.S. Jr."/>
            <person name="Sampaio S.V."/>
            <person name="Antunes L.M.G."/>
        </authorList>
    </citation>
    <scope>FUNCTION</scope>
</reference>
<protein>
    <recommendedName>
        <fullName evidence="8">L-amino-acid oxidase BjussuLAAO-II</fullName>
        <shortName>LAO</shortName>
        <ecNumber evidence="4">1.4.3.2</ecNumber>
    </recommendedName>
</protein>
<sequence length="116" mass="13515">ADDRNPLEECFRETDYEEFLEIARNGLSDTDNPKEGWYANLGPMRLNEFSQENENAWYFIKDPGVLDYPVKPSEVGKHDDIFAYEKRFDEIVGGMDKEVTVTYQTSEKFEPPLPPK</sequence>
<comment type="function">
    <text evidence="2 4 5 6 7">Catalyzes an oxidative deamination of predominantly hydrophobic and aromatic L-amino acids, thus producing hydrogen peroxide that may contribute to the diverse toxic effects of this enzyme (By similarity) (PubMed:28495622). Shows very high enzymatic activity on L-Met and L-Leu, high activity on L-Ile, L-Phe and L-Tyr and moderate activity on L-His (PubMed:28495622, PubMed:30534149). Exhibits diverse biological activities, such as hemorrhage, hemolysis, edema, apoptosis of vascular endothelial cells or tumor cell lines, and antibacterial, as well as regulation of platelet aggregation (By similarity). Effects of snake L-amino oxidases on platelets are controversial, since they either induce aggregation or inhibit agonist-induced aggregation (By similarity). These different effects are probably due to different experimental conditions (By similarity). In vitro, has a strong antiprotozoal effect against Leishmania amazonensis (IC(50)=4.56 ug/mL) and Trypanosoma cruzi (IC(50)=4.85 ug/mL) (PubMed:28495622). It also causes cell death and DNA damage in hepatocarcinoma cells (HepG2) in vitro by inducing oxidative stress (PubMed:30654040). It exerts cytotoxicity towards colorectal adenocarcinomahuman cells (Caco-2) by acting on multiple intracellular targets (PubMed:29222016). It diminishes cell viability by decreasing mitochondrial activity, the activity of acid phosphatases, and lysosomal function (PubMed:29222016). In addition, it increases intracellular levels of reactive oxygen species and DNA damage, it elevates the expression of the pro-inflammatory cytokine genes TNF and IL6, and lowers the expression of the apoptotic-related genes (PubMed:29222016). Also induces cytotoxicity (IC(50)=1.80 ug/mL) and apoptosis in MCF-7 cells (a human breast adeno-carcinoma cell line) by activating the intrinsic and extrinsic apoptosis pathways, but are not cytotoxic towards MCF-10A cells (a non-tumorigenic human breast epithelial cell line) (PubMed:28495622).</text>
</comment>
<comment type="catalytic activity">
    <reaction evidence="4 6">
        <text>an L-alpha-amino acid + O2 + H2O = a 2-oxocarboxylate + H2O2 + NH4(+)</text>
        <dbReference type="Rhea" id="RHEA:13781"/>
        <dbReference type="ChEBI" id="CHEBI:15377"/>
        <dbReference type="ChEBI" id="CHEBI:15379"/>
        <dbReference type="ChEBI" id="CHEBI:16240"/>
        <dbReference type="ChEBI" id="CHEBI:28938"/>
        <dbReference type="ChEBI" id="CHEBI:35179"/>
        <dbReference type="ChEBI" id="CHEBI:59869"/>
        <dbReference type="EC" id="1.4.3.2"/>
    </reaction>
</comment>
<comment type="catalytic activity">
    <reaction evidence="4 6">
        <text>L-leucine + O2 + H2O = 4-methyl-2-oxopentanoate + H2O2 + NH4(+)</text>
        <dbReference type="Rhea" id="RHEA:60996"/>
        <dbReference type="ChEBI" id="CHEBI:15377"/>
        <dbReference type="ChEBI" id="CHEBI:15379"/>
        <dbReference type="ChEBI" id="CHEBI:16240"/>
        <dbReference type="ChEBI" id="CHEBI:17865"/>
        <dbReference type="ChEBI" id="CHEBI:28938"/>
        <dbReference type="ChEBI" id="CHEBI:57427"/>
    </reaction>
</comment>
<comment type="catalytic activity">
    <reaction evidence="6">
        <text>L-phenylalanine + O2 + H2O = 3-phenylpyruvate + H2O2 + NH4(+)</text>
        <dbReference type="Rhea" id="RHEA:61240"/>
        <dbReference type="ChEBI" id="CHEBI:15377"/>
        <dbReference type="ChEBI" id="CHEBI:15379"/>
        <dbReference type="ChEBI" id="CHEBI:16240"/>
        <dbReference type="ChEBI" id="CHEBI:18005"/>
        <dbReference type="ChEBI" id="CHEBI:28938"/>
        <dbReference type="ChEBI" id="CHEBI:58095"/>
    </reaction>
</comment>
<comment type="catalytic activity">
    <reaction evidence="6">
        <text>L-methionine + O2 + H2O = 4-methylsulfanyl-2-oxobutanoate + H2O2 + NH4(+)</text>
        <dbReference type="Rhea" id="RHEA:61236"/>
        <dbReference type="ChEBI" id="CHEBI:15377"/>
        <dbReference type="ChEBI" id="CHEBI:15379"/>
        <dbReference type="ChEBI" id="CHEBI:16240"/>
        <dbReference type="ChEBI" id="CHEBI:16723"/>
        <dbReference type="ChEBI" id="CHEBI:28938"/>
        <dbReference type="ChEBI" id="CHEBI:57844"/>
    </reaction>
</comment>
<comment type="catalytic activity">
    <reaction evidence="6">
        <text>L-isoleucine + O2 + H2O = (S)-3-methyl-2-oxopentanoate + H2O2 + NH4(+)</text>
        <dbReference type="Rhea" id="RHEA:61232"/>
        <dbReference type="ChEBI" id="CHEBI:15377"/>
        <dbReference type="ChEBI" id="CHEBI:15379"/>
        <dbReference type="ChEBI" id="CHEBI:16240"/>
        <dbReference type="ChEBI" id="CHEBI:28938"/>
        <dbReference type="ChEBI" id="CHEBI:35146"/>
        <dbReference type="ChEBI" id="CHEBI:58045"/>
    </reaction>
</comment>
<comment type="catalytic activity">
    <reaction evidence="6">
        <text>L-histidine + O2 + H2O = 3-(imidazol-5-yl)pyruvate + H2O2 + NH4(+)</text>
        <dbReference type="Rhea" id="RHEA:61228"/>
        <dbReference type="ChEBI" id="CHEBI:15377"/>
        <dbReference type="ChEBI" id="CHEBI:15379"/>
        <dbReference type="ChEBI" id="CHEBI:16240"/>
        <dbReference type="ChEBI" id="CHEBI:28938"/>
        <dbReference type="ChEBI" id="CHEBI:57595"/>
        <dbReference type="ChEBI" id="CHEBI:58133"/>
    </reaction>
</comment>
<comment type="catalytic activity">
    <reaction evidence="6">
        <text>L-tyrosine + O2 + H2O = 3-(4-hydroxyphenyl)pyruvate + H2O2 + NH4(+)</text>
        <dbReference type="Rhea" id="RHEA:61248"/>
        <dbReference type="ChEBI" id="CHEBI:15377"/>
        <dbReference type="ChEBI" id="CHEBI:15379"/>
        <dbReference type="ChEBI" id="CHEBI:16240"/>
        <dbReference type="ChEBI" id="CHEBI:28938"/>
        <dbReference type="ChEBI" id="CHEBI:36242"/>
        <dbReference type="ChEBI" id="CHEBI:58315"/>
    </reaction>
</comment>
<comment type="catalytic activity">
    <reaction evidence="2">
        <text>L-tryptophan + O2 + H2O = indole-3-pyruvate + H2O2 + NH4(+)</text>
        <dbReference type="Rhea" id="RHEA:61244"/>
        <dbReference type="ChEBI" id="CHEBI:15377"/>
        <dbReference type="ChEBI" id="CHEBI:15379"/>
        <dbReference type="ChEBI" id="CHEBI:16240"/>
        <dbReference type="ChEBI" id="CHEBI:17640"/>
        <dbReference type="ChEBI" id="CHEBI:28938"/>
        <dbReference type="ChEBI" id="CHEBI:57912"/>
    </reaction>
</comment>
<comment type="cofactor">
    <cofactor evidence="2">
        <name>FAD</name>
        <dbReference type="ChEBI" id="CHEBI:57692"/>
    </cofactor>
</comment>
<comment type="activity regulation">
    <text evidence="6">Its enzymatic activities is reduced by the presence of Zn(2+), Al(3+), Cu(2+), Na(+) or Ni(2+) salts.</text>
</comment>
<comment type="biophysicochemical properties">
    <kinetics>
        <KM evidence="6">0.1 mM for L-Phe</KM>
        <KM evidence="6">0.3 mM for L-Leu</KM>
        <KM evidence="6">0.6 mM for L-Met</KM>
        <KM evidence="6">1.1 mM for L-Tyr</KM>
        <KM evidence="6">2 mM for L-Ile</KM>
        <KM evidence="6">14.1 mM for L-His</KM>
        <KM evidence="6">3.2 mM for L-Gln</KM>
    </kinetics>
    <phDependence>
        <text evidence="6">Optimum pH is 6-9.</text>
    </phDependence>
    <temperatureDependence>
        <text evidence="6">Optimum temperature is 60 degrees Celsius.</text>
    </temperatureDependence>
</comment>
<comment type="subunit">
    <text evidence="2">Homodimer; non-covalently linked.</text>
</comment>
<comment type="subcellular location">
    <subcellularLocation>
        <location evidence="4">Secreted</location>
    </subcellularLocation>
</comment>
<comment type="tissue specificity">
    <text evidence="10">Expressed by the venom gland.</text>
</comment>
<comment type="PTM">
    <text evidence="3">Glycosylated.</text>
</comment>
<comment type="miscellaneous">
    <text evidence="6">Negative results: shows low or absent catalytic activity on L-Arg, L-Glu, L-Val, L-Ala, L-Asp, L-Lys, L-Asn, L-Ser, L-Thr, L-Pro, L-Gln, L-Gly, and L-Cys.</text>
</comment>
<comment type="similarity">
    <text evidence="9">Belongs to the flavin monoamine oxidase family. FIG1 subfamily.</text>
</comment>
<keyword id="KW-0044">Antibiotic</keyword>
<keyword id="KW-0929">Antimicrobial</keyword>
<keyword id="KW-0053">Apoptosis</keyword>
<keyword id="KW-0204">Cytolysis</keyword>
<keyword id="KW-0903">Direct protein sequencing</keyword>
<keyword id="KW-1015">Disulfide bond</keyword>
<keyword id="KW-0274">FAD</keyword>
<keyword id="KW-0285">Flavoprotein</keyword>
<keyword id="KW-0325">Glycoprotein</keyword>
<keyword id="KW-0354">Hemolysis</keyword>
<keyword id="KW-1199">Hemostasis impairing toxin</keyword>
<keyword id="KW-0547">Nucleotide-binding</keyword>
<keyword id="KW-0560">Oxidoreductase</keyword>
<keyword id="KW-0964">Secreted</keyword>
<keyword id="KW-0800">Toxin</keyword>
<dbReference type="EC" id="1.4.3.2" evidence="4"/>
<dbReference type="GO" id="GO:0005576">
    <property type="term" value="C:extracellular region"/>
    <property type="evidence" value="ECO:0007669"/>
    <property type="project" value="UniProtKB-SubCell"/>
</dbReference>
<dbReference type="GO" id="GO:0000166">
    <property type="term" value="F:nucleotide binding"/>
    <property type="evidence" value="ECO:0007669"/>
    <property type="project" value="UniProtKB-KW"/>
</dbReference>
<dbReference type="GO" id="GO:0016491">
    <property type="term" value="F:oxidoreductase activity"/>
    <property type="evidence" value="ECO:0007669"/>
    <property type="project" value="UniProtKB-KW"/>
</dbReference>
<dbReference type="GO" id="GO:0090729">
    <property type="term" value="F:toxin activity"/>
    <property type="evidence" value="ECO:0007669"/>
    <property type="project" value="UniProtKB-KW"/>
</dbReference>
<dbReference type="GO" id="GO:0006915">
    <property type="term" value="P:apoptotic process"/>
    <property type="evidence" value="ECO:0007669"/>
    <property type="project" value="UniProtKB-KW"/>
</dbReference>
<dbReference type="GO" id="GO:0042742">
    <property type="term" value="P:defense response to bacterium"/>
    <property type="evidence" value="ECO:0007669"/>
    <property type="project" value="UniProtKB-KW"/>
</dbReference>
<dbReference type="GO" id="GO:0031640">
    <property type="term" value="P:killing of cells of another organism"/>
    <property type="evidence" value="ECO:0007669"/>
    <property type="project" value="UniProtKB-KW"/>
</dbReference>
<dbReference type="Gene3D" id="3.90.660.10">
    <property type="match status" value="1"/>
</dbReference>
<feature type="chain" id="PRO_0000455521" description="L-amino-acid oxidase BjussuLAAO-II" evidence="10">
    <location>
        <begin position="1"/>
        <end position="116" status="greater than"/>
    </location>
</feature>
<feature type="binding site" evidence="2">
    <location>
        <begin position="42"/>
        <end position="45"/>
    </location>
    <ligand>
        <name>FAD</name>
        <dbReference type="ChEBI" id="CHEBI:57692"/>
    </ligand>
</feature>
<feature type="binding site" evidence="1">
    <location>
        <position position="45"/>
    </location>
    <ligand>
        <name>substrate</name>
    </ligand>
</feature>
<feature type="binding site" evidence="1">
    <location>
        <position position="78"/>
    </location>
    <ligand>
        <name>substrate</name>
    </ligand>
</feature>
<feature type="disulfide bond" evidence="9">
    <location>
        <begin position="10"/>
        <end status="unknown"/>
    </location>
</feature>
<feature type="non-consecutive residues" evidence="10">
    <location>
        <begin position="34"/>
        <end position="35"/>
    </location>
</feature>
<feature type="non-consecutive residues" evidence="10">
    <location>
        <begin position="45"/>
        <end position="46"/>
    </location>
</feature>
<feature type="non-consecutive residues" evidence="10">
    <location>
        <begin position="61"/>
        <end position="62"/>
    </location>
</feature>
<feature type="non-consecutive residues" evidence="10">
    <location>
        <begin position="76"/>
        <end position="77"/>
    </location>
</feature>
<feature type="non-consecutive residues" evidence="10">
    <location>
        <begin position="96"/>
        <end position="97"/>
    </location>
</feature>
<feature type="non-consecutive residues" evidence="10">
    <location>
        <begin position="108"/>
        <end position="109"/>
    </location>
</feature>
<feature type="non-terminal residue" evidence="10">
    <location>
        <position position="116"/>
    </location>
</feature>
<name>OXLA2_BOTJR</name>
<proteinExistence type="evidence at protein level"/>
<evidence type="ECO:0000250" key="1">
    <source>
        <dbReference type="UniProtKB" id="P81382"/>
    </source>
</evidence>
<evidence type="ECO:0000250" key="2">
    <source>
        <dbReference type="UniProtKB" id="Q6TGQ9"/>
    </source>
</evidence>
<evidence type="ECO:0000255" key="3"/>
<evidence type="ECO:0000269" key="4">
    <source>
    </source>
</evidence>
<evidence type="ECO:0000269" key="5">
    <source>
    </source>
</evidence>
<evidence type="ECO:0000269" key="6">
    <source>
    </source>
</evidence>
<evidence type="ECO:0000269" key="7">
    <source>
    </source>
</evidence>
<evidence type="ECO:0000303" key="8">
    <source>
    </source>
</evidence>
<evidence type="ECO:0000305" key="9"/>
<evidence type="ECO:0000305" key="10">
    <source>
    </source>
</evidence>